<accession>Q7MZB7</accession>
<reference key="1">
    <citation type="journal article" date="2003" name="Nat. Biotechnol.">
        <title>The genome sequence of the entomopathogenic bacterium Photorhabdus luminescens.</title>
        <authorList>
            <person name="Duchaud E."/>
            <person name="Rusniok C."/>
            <person name="Frangeul L."/>
            <person name="Buchrieser C."/>
            <person name="Givaudan A."/>
            <person name="Taourit S."/>
            <person name="Bocs S."/>
            <person name="Boursaux-Eude C."/>
            <person name="Chandler M."/>
            <person name="Charles J.-F."/>
            <person name="Dassa E."/>
            <person name="Derose R."/>
            <person name="Derzelle S."/>
            <person name="Freyssinet G."/>
            <person name="Gaudriault S."/>
            <person name="Medigue C."/>
            <person name="Lanois A."/>
            <person name="Powell K."/>
            <person name="Siguier P."/>
            <person name="Vincent R."/>
            <person name="Wingate V."/>
            <person name="Zouine M."/>
            <person name="Glaser P."/>
            <person name="Boemare N."/>
            <person name="Danchin A."/>
            <person name="Kunst F."/>
        </authorList>
    </citation>
    <scope>NUCLEOTIDE SEQUENCE [LARGE SCALE GENOMIC DNA]</scope>
    <source>
        <strain>DSM 15139 / CIP 105565 / TT01</strain>
    </source>
</reference>
<keyword id="KW-0012">Acyltransferase</keyword>
<keyword id="KW-0997">Cell inner membrane</keyword>
<keyword id="KW-1003">Cell membrane</keyword>
<keyword id="KW-0444">Lipid biosynthesis</keyword>
<keyword id="KW-0443">Lipid metabolism</keyword>
<keyword id="KW-0472">Membrane</keyword>
<keyword id="KW-0594">Phospholipid biosynthesis</keyword>
<keyword id="KW-1208">Phospholipid metabolism</keyword>
<keyword id="KW-1185">Reference proteome</keyword>
<keyword id="KW-0808">Transferase</keyword>
<protein>
    <recommendedName>
        <fullName evidence="1">Glycerol-3-phosphate acyltransferase</fullName>
        <shortName evidence="1">GPAT</shortName>
        <ecNumber evidence="1">2.3.1.15</ecNumber>
    </recommendedName>
</protein>
<dbReference type="EC" id="2.3.1.15" evidence="1"/>
<dbReference type="EMBL" id="BX571873">
    <property type="protein sequence ID" value="CAE16748.1"/>
    <property type="molecule type" value="Genomic_DNA"/>
</dbReference>
<dbReference type="RefSeq" id="WP_011148466.1">
    <property type="nucleotide sequence ID" value="NC_005126.1"/>
</dbReference>
<dbReference type="SMR" id="Q7MZB7"/>
<dbReference type="STRING" id="243265.plu4376"/>
<dbReference type="GeneID" id="48850586"/>
<dbReference type="KEGG" id="plu:plu4376"/>
<dbReference type="eggNOG" id="COG2937">
    <property type="taxonomic scope" value="Bacteria"/>
</dbReference>
<dbReference type="HOGENOM" id="CLU_015407_0_0_6"/>
<dbReference type="OrthoDB" id="335193at2"/>
<dbReference type="UniPathway" id="UPA00557">
    <property type="reaction ID" value="UER00612"/>
</dbReference>
<dbReference type="Proteomes" id="UP000002514">
    <property type="component" value="Chromosome"/>
</dbReference>
<dbReference type="GO" id="GO:0005886">
    <property type="term" value="C:plasma membrane"/>
    <property type="evidence" value="ECO:0007669"/>
    <property type="project" value="UniProtKB-SubCell"/>
</dbReference>
<dbReference type="GO" id="GO:0004366">
    <property type="term" value="F:glycerol-3-phosphate O-acyltransferase activity"/>
    <property type="evidence" value="ECO:0007669"/>
    <property type="project" value="UniProtKB-UniRule"/>
</dbReference>
<dbReference type="GO" id="GO:0016024">
    <property type="term" value="P:CDP-diacylglycerol biosynthetic process"/>
    <property type="evidence" value="ECO:0007669"/>
    <property type="project" value="UniProtKB-UniRule"/>
</dbReference>
<dbReference type="GO" id="GO:0006631">
    <property type="term" value="P:fatty acid metabolic process"/>
    <property type="evidence" value="ECO:0007669"/>
    <property type="project" value="TreeGrafter"/>
</dbReference>
<dbReference type="CDD" id="cd07993">
    <property type="entry name" value="LPLAT_DHAPAT-like"/>
    <property type="match status" value="1"/>
</dbReference>
<dbReference type="HAMAP" id="MF_00393">
    <property type="entry name" value="Glyc3P_acyltrans"/>
    <property type="match status" value="1"/>
</dbReference>
<dbReference type="InterPro" id="IPR022284">
    <property type="entry name" value="GPAT/DHAPAT"/>
</dbReference>
<dbReference type="InterPro" id="IPR045520">
    <property type="entry name" value="GPAT/DHAPAT_C"/>
</dbReference>
<dbReference type="InterPro" id="IPR041728">
    <property type="entry name" value="GPAT/DHAPAT_LPLAT"/>
</dbReference>
<dbReference type="InterPro" id="IPR028354">
    <property type="entry name" value="GPAT_PlsB"/>
</dbReference>
<dbReference type="InterPro" id="IPR002123">
    <property type="entry name" value="Plipid/glycerol_acylTrfase"/>
</dbReference>
<dbReference type="NCBIfam" id="TIGR03703">
    <property type="entry name" value="plsB"/>
    <property type="match status" value="1"/>
</dbReference>
<dbReference type="NCBIfam" id="NF003441">
    <property type="entry name" value="PRK04974.1"/>
    <property type="match status" value="1"/>
</dbReference>
<dbReference type="PANTHER" id="PTHR12563:SF17">
    <property type="entry name" value="DIHYDROXYACETONE PHOSPHATE ACYLTRANSFERASE"/>
    <property type="match status" value="1"/>
</dbReference>
<dbReference type="PANTHER" id="PTHR12563">
    <property type="entry name" value="GLYCEROL-3-PHOSPHATE ACYLTRANSFERASE"/>
    <property type="match status" value="1"/>
</dbReference>
<dbReference type="Pfam" id="PF01553">
    <property type="entry name" value="Acyltransferase"/>
    <property type="match status" value="1"/>
</dbReference>
<dbReference type="Pfam" id="PF19277">
    <property type="entry name" value="GPAT_C"/>
    <property type="match status" value="1"/>
</dbReference>
<dbReference type="PIRSF" id="PIRSF500064">
    <property type="entry name" value="GPAT"/>
    <property type="match status" value="1"/>
</dbReference>
<dbReference type="PIRSF" id="PIRSF000437">
    <property type="entry name" value="GPAT_DHAPAT"/>
    <property type="match status" value="1"/>
</dbReference>
<dbReference type="SMART" id="SM00563">
    <property type="entry name" value="PlsC"/>
    <property type="match status" value="1"/>
</dbReference>
<dbReference type="SUPFAM" id="SSF69593">
    <property type="entry name" value="Glycerol-3-phosphate (1)-acyltransferase"/>
    <property type="match status" value="1"/>
</dbReference>
<gene>
    <name evidence="1" type="primary">plsB</name>
    <name type="ordered locus">plu4376</name>
</gene>
<feature type="chain" id="PRO_0000195227" description="Glycerol-3-phosphate acyltransferase">
    <location>
        <begin position="1"/>
        <end position="818"/>
    </location>
</feature>
<feature type="short sequence motif" description="HXXXXD motif">
    <location>
        <begin position="305"/>
        <end position="310"/>
    </location>
</feature>
<sequence length="818" mass="93638">MSSWRKIYYKLLNLPLKILVKSKLIPTDPITELRLDTTRPILYVLPYHSKADLLALRQQCLEQDLPDPLNLLEIGDTELPSYVFIDNGPRVFRYCAPKQESVKIFHAYLDLHRNNPNLDIQLLPVSVMFGRSPGREGQNAPHLRLLNGIQKFFAILWLGRDSFVRFSNTVSLRYMATEHGTDKTIAHKLARVARMHYSRQRLAAVGPRLPVRQELFNKLLASKAIEKAVSDEARTKKISHEKARQNAINMMEEIAANFSYETVRLSGRVLGWTWNRLYQGINVHNAERIRRLAQDGHELVYAPCHRSHMDYLLLSYVLYHQGLVPPHIAAGINLNFWPAGPIFRRLGAFFIRRTFKGNKLYATIFREYLGELFARGYSVEYFMEGGRSRTGRLLDPKTGTLSMTLQALLRGESRPITIIPIYIGYEHVMEVATYAKELRGATKEKEGFFQMIRGLRKLRNLGQGYVNFGEPIPLIQYLNNHVPSWRDSIDPIEFHRPEWFNPTVNQLSEKIMVNINNTAAANAINLCSTALLASRQRALTREQLLEQLDCYIQLMRNAPYATDVTVPKKTAEELLEHALQMDKFEVDKDSMGDIIILPRDRAVLMTYYRNNIQHLLVLPSLIACIVIHHRRISREALLSQVAIIYPLLKAELFMRYSKTELPEVVNTLINELTRQCLICNKEHGMLVLNPARIRPLQLLAAGIRETLQRYAITLSLLNANPVISRGVLEKESRMLAQRLSVLHGINAPEFFDKAVFTTSVNTLREEGYISDSGNAITANTQELYQVLGELMSPEIRLTIESVSLPPEHNDTEESAREG</sequence>
<proteinExistence type="inferred from homology"/>
<comment type="catalytic activity">
    <reaction evidence="1">
        <text>sn-glycerol 3-phosphate + an acyl-CoA = a 1-acyl-sn-glycero-3-phosphate + CoA</text>
        <dbReference type="Rhea" id="RHEA:15325"/>
        <dbReference type="ChEBI" id="CHEBI:57287"/>
        <dbReference type="ChEBI" id="CHEBI:57597"/>
        <dbReference type="ChEBI" id="CHEBI:57970"/>
        <dbReference type="ChEBI" id="CHEBI:58342"/>
        <dbReference type="EC" id="2.3.1.15"/>
    </reaction>
</comment>
<comment type="pathway">
    <text evidence="1">Phospholipid metabolism; CDP-diacylglycerol biosynthesis; CDP-diacylglycerol from sn-glycerol 3-phosphate: step 1/3.</text>
</comment>
<comment type="subcellular location">
    <subcellularLocation>
        <location evidence="1">Cell inner membrane</location>
        <topology evidence="1">Peripheral membrane protein</topology>
        <orientation evidence="1">Cytoplasmic side</orientation>
    </subcellularLocation>
</comment>
<comment type="domain">
    <text evidence="1">The HXXXXD motif is essential for acyltransferase activity and may constitute the binding site for the phosphate moiety of the glycerol-3-phosphate.</text>
</comment>
<comment type="similarity">
    <text evidence="1">Belongs to the GPAT/DAPAT family.</text>
</comment>
<organism>
    <name type="scientific">Photorhabdus laumondii subsp. laumondii (strain DSM 15139 / CIP 105565 / TT01)</name>
    <name type="common">Photorhabdus luminescens subsp. laumondii</name>
    <dbReference type="NCBI Taxonomy" id="243265"/>
    <lineage>
        <taxon>Bacteria</taxon>
        <taxon>Pseudomonadati</taxon>
        <taxon>Pseudomonadota</taxon>
        <taxon>Gammaproteobacteria</taxon>
        <taxon>Enterobacterales</taxon>
        <taxon>Morganellaceae</taxon>
        <taxon>Photorhabdus</taxon>
    </lineage>
</organism>
<evidence type="ECO:0000255" key="1">
    <source>
        <dbReference type="HAMAP-Rule" id="MF_00393"/>
    </source>
</evidence>
<name>PLSB_PHOLL</name>